<organism>
    <name type="scientific">Mycolicibacterium gilvum (strain PYR-GCK)</name>
    <name type="common">Mycobacterium gilvum (strain PYR-GCK)</name>
    <dbReference type="NCBI Taxonomy" id="350054"/>
    <lineage>
        <taxon>Bacteria</taxon>
        <taxon>Bacillati</taxon>
        <taxon>Actinomycetota</taxon>
        <taxon>Actinomycetes</taxon>
        <taxon>Mycobacteriales</taxon>
        <taxon>Mycobacteriaceae</taxon>
        <taxon>Mycolicibacterium</taxon>
    </lineage>
</organism>
<gene>
    <name evidence="1" type="primary">glmM</name>
    <name type="ordered locus">Mflv_4947</name>
</gene>
<evidence type="ECO:0000255" key="1">
    <source>
        <dbReference type="HAMAP-Rule" id="MF_01554"/>
    </source>
</evidence>
<comment type="function">
    <text evidence="1">Catalyzes the conversion of glucosamine-6-phosphate to glucosamine-1-phosphate.</text>
</comment>
<comment type="catalytic activity">
    <reaction evidence="1">
        <text>alpha-D-glucosamine 1-phosphate = D-glucosamine 6-phosphate</text>
        <dbReference type="Rhea" id="RHEA:23424"/>
        <dbReference type="ChEBI" id="CHEBI:58516"/>
        <dbReference type="ChEBI" id="CHEBI:58725"/>
        <dbReference type="EC" id="5.4.2.10"/>
    </reaction>
</comment>
<comment type="cofactor">
    <cofactor evidence="1">
        <name>Mg(2+)</name>
        <dbReference type="ChEBI" id="CHEBI:18420"/>
    </cofactor>
    <text evidence="1">Binds 1 Mg(2+) ion per subunit.</text>
</comment>
<comment type="PTM">
    <text evidence="1">Activated by phosphorylation.</text>
</comment>
<comment type="similarity">
    <text evidence="1">Belongs to the phosphohexose mutase family.</text>
</comment>
<protein>
    <recommendedName>
        <fullName evidence="1">Phosphoglucosamine mutase</fullName>
        <ecNumber evidence="1">5.4.2.10</ecNumber>
    </recommendedName>
</protein>
<name>GLMM_MYCGI</name>
<feature type="chain" id="PRO_1000087770" description="Phosphoglucosamine mutase">
    <location>
        <begin position="1"/>
        <end position="445"/>
    </location>
</feature>
<feature type="active site" description="Phosphoserine intermediate" evidence="1">
    <location>
        <position position="102"/>
    </location>
</feature>
<feature type="binding site" description="via phosphate group" evidence="1">
    <location>
        <position position="102"/>
    </location>
    <ligand>
        <name>Mg(2+)</name>
        <dbReference type="ChEBI" id="CHEBI:18420"/>
    </ligand>
</feature>
<feature type="binding site" evidence="1">
    <location>
        <position position="240"/>
    </location>
    <ligand>
        <name>Mg(2+)</name>
        <dbReference type="ChEBI" id="CHEBI:18420"/>
    </ligand>
</feature>
<feature type="binding site" evidence="1">
    <location>
        <position position="242"/>
    </location>
    <ligand>
        <name>Mg(2+)</name>
        <dbReference type="ChEBI" id="CHEBI:18420"/>
    </ligand>
</feature>
<feature type="binding site" evidence="1">
    <location>
        <position position="244"/>
    </location>
    <ligand>
        <name>Mg(2+)</name>
        <dbReference type="ChEBI" id="CHEBI:18420"/>
    </ligand>
</feature>
<feature type="modified residue" description="Phosphoserine" evidence="1">
    <location>
        <position position="102"/>
    </location>
</feature>
<dbReference type="EC" id="5.4.2.10" evidence="1"/>
<dbReference type="EMBL" id="CP000656">
    <property type="protein sequence ID" value="ABP47413.1"/>
    <property type="molecule type" value="Genomic_DNA"/>
</dbReference>
<dbReference type="SMR" id="A4TEL0"/>
<dbReference type="STRING" id="350054.Mflv_4947"/>
<dbReference type="KEGG" id="mgi:Mflv_4947"/>
<dbReference type="eggNOG" id="COG1109">
    <property type="taxonomic scope" value="Bacteria"/>
</dbReference>
<dbReference type="HOGENOM" id="CLU_016950_7_0_11"/>
<dbReference type="OrthoDB" id="9803322at2"/>
<dbReference type="GO" id="GO:0005829">
    <property type="term" value="C:cytosol"/>
    <property type="evidence" value="ECO:0007669"/>
    <property type="project" value="TreeGrafter"/>
</dbReference>
<dbReference type="GO" id="GO:0000287">
    <property type="term" value="F:magnesium ion binding"/>
    <property type="evidence" value="ECO:0007669"/>
    <property type="project" value="UniProtKB-UniRule"/>
</dbReference>
<dbReference type="GO" id="GO:0008966">
    <property type="term" value="F:phosphoglucosamine mutase activity"/>
    <property type="evidence" value="ECO:0007669"/>
    <property type="project" value="UniProtKB-UniRule"/>
</dbReference>
<dbReference type="GO" id="GO:0004615">
    <property type="term" value="F:phosphomannomutase activity"/>
    <property type="evidence" value="ECO:0007669"/>
    <property type="project" value="TreeGrafter"/>
</dbReference>
<dbReference type="GO" id="GO:0005975">
    <property type="term" value="P:carbohydrate metabolic process"/>
    <property type="evidence" value="ECO:0007669"/>
    <property type="project" value="InterPro"/>
</dbReference>
<dbReference type="GO" id="GO:0009252">
    <property type="term" value="P:peptidoglycan biosynthetic process"/>
    <property type="evidence" value="ECO:0007669"/>
    <property type="project" value="TreeGrafter"/>
</dbReference>
<dbReference type="GO" id="GO:0006048">
    <property type="term" value="P:UDP-N-acetylglucosamine biosynthetic process"/>
    <property type="evidence" value="ECO:0007669"/>
    <property type="project" value="TreeGrafter"/>
</dbReference>
<dbReference type="CDD" id="cd05802">
    <property type="entry name" value="GlmM"/>
    <property type="match status" value="1"/>
</dbReference>
<dbReference type="FunFam" id="3.30.310.50:FF:000001">
    <property type="entry name" value="Phosphoglucosamine mutase"/>
    <property type="match status" value="1"/>
</dbReference>
<dbReference type="FunFam" id="3.40.120.10:FF:000001">
    <property type="entry name" value="Phosphoglucosamine mutase"/>
    <property type="match status" value="1"/>
</dbReference>
<dbReference type="FunFam" id="3.40.120.10:FF:000002">
    <property type="entry name" value="Phosphoglucosamine mutase"/>
    <property type="match status" value="1"/>
</dbReference>
<dbReference type="Gene3D" id="3.40.120.10">
    <property type="entry name" value="Alpha-D-Glucose-1,6-Bisphosphate, subunit A, domain 3"/>
    <property type="match status" value="3"/>
</dbReference>
<dbReference type="Gene3D" id="3.30.310.50">
    <property type="entry name" value="Alpha-D-phosphohexomutase, C-terminal domain"/>
    <property type="match status" value="1"/>
</dbReference>
<dbReference type="HAMAP" id="MF_01554_B">
    <property type="entry name" value="GlmM_B"/>
    <property type="match status" value="1"/>
</dbReference>
<dbReference type="InterPro" id="IPR005844">
    <property type="entry name" value="A-D-PHexomutase_a/b/a-I"/>
</dbReference>
<dbReference type="InterPro" id="IPR016055">
    <property type="entry name" value="A-D-PHexomutase_a/b/a-I/II/III"/>
</dbReference>
<dbReference type="InterPro" id="IPR005845">
    <property type="entry name" value="A-D-PHexomutase_a/b/a-II"/>
</dbReference>
<dbReference type="InterPro" id="IPR005846">
    <property type="entry name" value="A-D-PHexomutase_a/b/a-III"/>
</dbReference>
<dbReference type="InterPro" id="IPR005843">
    <property type="entry name" value="A-D-PHexomutase_C"/>
</dbReference>
<dbReference type="InterPro" id="IPR036900">
    <property type="entry name" value="A-D-PHexomutase_C_sf"/>
</dbReference>
<dbReference type="InterPro" id="IPR016066">
    <property type="entry name" value="A-D-PHexomutase_CS"/>
</dbReference>
<dbReference type="InterPro" id="IPR005841">
    <property type="entry name" value="Alpha-D-phosphohexomutase_SF"/>
</dbReference>
<dbReference type="InterPro" id="IPR006352">
    <property type="entry name" value="GlmM_bact"/>
</dbReference>
<dbReference type="InterPro" id="IPR050060">
    <property type="entry name" value="Phosphoglucosamine_mutase"/>
</dbReference>
<dbReference type="NCBIfam" id="TIGR01455">
    <property type="entry name" value="glmM"/>
    <property type="match status" value="1"/>
</dbReference>
<dbReference type="PANTHER" id="PTHR42946:SF1">
    <property type="entry name" value="PHOSPHOGLUCOMUTASE (ALPHA-D-GLUCOSE-1,6-BISPHOSPHATE-DEPENDENT)"/>
    <property type="match status" value="1"/>
</dbReference>
<dbReference type="PANTHER" id="PTHR42946">
    <property type="entry name" value="PHOSPHOHEXOSE MUTASE"/>
    <property type="match status" value="1"/>
</dbReference>
<dbReference type="Pfam" id="PF02878">
    <property type="entry name" value="PGM_PMM_I"/>
    <property type="match status" value="1"/>
</dbReference>
<dbReference type="Pfam" id="PF02879">
    <property type="entry name" value="PGM_PMM_II"/>
    <property type="match status" value="1"/>
</dbReference>
<dbReference type="Pfam" id="PF02880">
    <property type="entry name" value="PGM_PMM_III"/>
    <property type="match status" value="1"/>
</dbReference>
<dbReference type="Pfam" id="PF00408">
    <property type="entry name" value="PGM_PMM_IV"/>
    <property type="match status" value="1"/>
</dbReference>
<dbReference type="PRINTS" id="PR00509">
    <property type="entry name" value="PGMPMM"/>
</dbReference>
<dbReference type="SUPFAM" id="SSF55957">
    <property type="entry name" value="Phosphoglucomutase, C-terminal domain"/>
    <property type="match status" value="1"/>
</dbReference>
<dbReference type="SUPFAM" id="SSF53738">
    <property type="entry name" value="Phosphoglucomutase, first 3 domains"/>
    <property type="match status" value="3"/>
</dbReference>
<dbReference type="PROSITE" id="PS00710">
    <property type="entry name" value="PGM_PMM"/>
    <property type="match status" value="1"/>
</dbReference>
<accession>A4TEL0</accession>
<reference key="1">
    <citation type="submission" date="2007-04" db="EMBL/GenBank/DDBJ databases">
        <title>Complete sequence of chromosome of Mycobacterium gilvum PYR-GCK.</title>
        <authorList>
            <consortium name="US DOE Joint Genome Institute"/>
            <person name="Copeland A."/>
            <person name="Lucas S."/>
            <person name="Lapidus A."/>
            <person name="Barry K."/>
            <person name="Detter J.C."/>
            <person name="Glavina del Rio T."/>
            <person name="Hammon N."/>
            <person name="Israni S."/>
            <person name="Dalin E."/>
            <person name="Tice H."/>
            <person name="Pitluck S."/>
            <person name="Chain P."/>
            <person name="Malfatti S."/>
            <person name="Shin M."/>
            <person name="Vergez L."/>
            <person name="Schmutz J."/>
            <person name="Larimer F."/>
            <person name="Land M."/>
            <person name="Hauser L."/>
            <person name="Kyrpides N."/>
            <person name="Mikhailova N."/>
            <person name="Miller C."/>
            <person name="Richardson P."/>
        </authorList>
    </citation>
    <scope>NUCLEOTIDE SEQUENCE [LARGE SCALE GENOMIC DNA]</scope>
    <source>
        <strain>PYR-GCK</strain>
    </source>
</reference>
<sequence>MARLFGTDGVRGVANRELTPELAMALGSAAARRLGRAGATRRRVAVVGRDPRASGEMLEAAVIAGIAGEGVDTLRVGILPTPAVAYLTSAYDADFGVMISASHNPMPDNGIKIFGPGGHKLDDATEDRIEELVHQGPGERPTGAGIGRVVDAEDALERYLRHVGKAATTRLDPLTVVVDCAHGAASVAAPRAYRAAGANVIPIHADPDGLNINDGCGSTHMESLRSAVVSYGADLGLAHDGDADRCLAVDAHGRVIDGDAIMVVLALAMQQSGELVSDTLVATVMSNMGLHLAMRSADIEVRTTGVGDRYVLEELRAGQFSLGGEQSGHIVLPSFGTTGDGIVTGLRLMARMAQTGRSLADLAQPMQTLPQVLINVEVADKTTVADAPSVRDAVAQVEAELGDTGRILLRPSGTEQVVRVMVEAADEDTARQMAVRVADSVSAES</sequence>
<proteinExistence type="inferred from homology"/>
<keyword id="KW-0413">Isomerase</keyword>
<keyword id="KW-0460">Magnesium</keyword>
<keyword id="KW-0479">Metal-binding</keyword>
<keyword id="KW-0597">Phosphoprotein</keyword>